<accession>Q9PI36</accession>
<accession>Q0PB40</accession>
<proteinExistence type="inferred from homology"/>
<organism>
    <name type="scientific">Campylobacter jejuni subsp. jejuni serotype O:2 (strain ATCC 700819 / NCTC 11168)</name>
    <dbReference type="NCBI Taxonomy" id="192222"/>
    <lineage>
        <taxon>Bacteria</taxon>
        <taxon>Pseudomonadati</taxon>
        <taxon>Campylobacterota</taxon>
        <taxon>Epsilonproteobacteria</taxon>
        <taxon>Campylobacterales</taxon>
        <taxon>Campylobacteraceae</taxon>
        <taxon>Campylobacter</taxon>
    </lineage>
</organism>
<protein>
    <recommendedName>
        <fullName evidence="1">Transcription termination/antitermination protein NusG</fullName>
    </recommendedName>
</protein>
<evidence type="ECO:0000255" key="1">
    <source>
        <dbReference type="HAMAP-Rule" id="MF_00948"/>
    </source>
</evidence>
<name>NUSG_CAMJE</name>
<comment type="function">
    <text evidence="1">Participates in transcription elongation, termination and antitermination.</text>
</comment>
<comment type="similarity">
    <text evidence="1">Belongs to the NusG family.</text>
</comment>
<reference key="1">
    <citation type="journal article" date="2000" name="Nature">
        <title>The genome sequence of the food-borne pathogen Campylobacter jejuni reveals hypervariable sequences.</title>
        <authorList>
            <person name="Parkhill J."/>
            <person name="Wren B.W."/>
            <person name="Mungall K.L."/>
            <person name="Ketley J.M."/>
            <person name="Churcher C.M."/>
            <person name="Basham D."/>
            <person name="Chillingworth T."/>
            <person name="Davies R.M."/>
            <person name="Feltwell T."/>
            <person name="Holroyd S."/>
            <person name="Jagels K."/>
            <person name="Karlyshev A.V."/>
            <person name="Moule S."/>
            <person name="Pallen M.J."/>
            <person name="Penn C.W."/>
            <person name="Quail M.A."/>
            <person name="Rajandream M.A."/>
            <person name="Rutherford K.M."/>
            <person name="van Vliet A.H.M."/>
            <person name="Whitehead S."/>
            <person name="Barrell B.G."/>
        </authorList>
    </citation>
    <scope>NUCLEOTIDE SEQUENCE [LARGE SCALE GENOMIC DNA]</scope>
    <source>
        <strain>ATCC 700819 / NCTC 11168</strain>
    </source>
</reference>
<keyword id="KW-1185">Reference proteome</keyword>
<keyword id="KW-0804">Transcription</keyword>
<keyword id="KW-0889">Transcription antitermination</keyword>
<keyword id="KW-0805">Transcription regulation</keyword>
<keyword id="KW-0806">Transcription termination</keyword>
<sequence>MSTHKWYAIQTYAGSEMAVKRAIENLVKDNGIEEQLKEIVVPTEDVIEFKNGKEKISERSLYSGYVFALLDLNTELWHRIQSLPKVGRFIGESKKPTPLTEKDINLILEKVHNRAAPKPKISFEEGENVRITEGPFANFTAIVEEYDMVRGLLKLNVSIFGRSTPVEILYSQVEKII</sequence>
<dbReference type="EMBL" id="AL111168">
    <property type="protein sequence ID" value="CAL34621.1"/>
    <property type="molecule type" value="Genomic_DNA"/>
</dbReference>
<dbReference type="PIR" id="D81392">
    <property type="entry name" value="D81392"/>
</dbReference>
<dbReference type="RefSeq" id="WP_002851098.1">
    <property type="nucleotide sequence ID" value="NZ_SZUC01000002.1"/>
</dbReference>
<dbReference type="RefSeq" id="YP_002343907.1">
    <property type="nucleotide sequence ID" value="NC_002163.1"/>
</dbReference>
<dbReference type="SMR" id="Q9PI36"/>
<dbReference type="IntAct" id="Q9PI36">
    <property type="interactions" value="8"/>
</dbReference>
<dbReference type="STRING" id="192222.Cj0473"/>
<dbReference type="PaxDb" id="192222-Cj0473"/>
<dbReference type="EnsemblBacteria" id="CAL34621">
    <property type="protein sequence ID" value="CAL34621"/>
    <property type="gene ID" value="Cj0473"/>
</dbReference>
<dbReference type="GeneID" id="904801"/>
<dbReference type="KEGG" id="cje:Cj0473"/>
<dbReference type="PATRIC" id="fig|192222.6.peg.465"/>
<dbReference type="eggNOG" id="COG0250">
    <property type="taxonomic scope" value="Bacteria"/>
</dbReference>
<dbReference type="HOGENOM" id="CLU_067287_1_0_7"/>
<dbReference type="OrthoDB" id="9809075at2"/>
<dbReference type="Proteomes" id="UP000000799">
    <property type="component" value="Chromosome"/>
</dbReference>
<dbReference type="GO" id="GO:0005829">
    <property type="term" value="C:cytosol"/>
    <property type="evidence" value="ECO:0007669"/>
    <property type="project" value="TreeGrafter"/>
</dbReference>
<dbReference type="GO" id="GO:0006353">
    <property type="term" value="P:DNA-templated transcription termination"/>
    <property type="evidence" value="ECO:0007669"/>
    <property type="project" value="UniProtKB-UniRule"/>
</dbReference>
<dbReference type="GO" id="GO:0032784">
    <property type="term" value="P:regulation of DNA-templated transcription elongation"/>
    <property type="evidence" value="ECO:0007669"/>
    <property type="project" value="InterPro"/>
</dbReference>
<dbReference type="GO" id="GO:0031564">
    <property type="term" value="P:transcription antitermination"/>
    <property type="evidence" value="ECO:0007669"/>
    <property type="project" value="UniProtKB-UniRule"/>
</dbReference>
<dbReference type="GO" id="GO:0140673">
    <property type="term" value="P:transcription elongation-coupled chromatin remodeling"/>
    <property type="evidence" value="ECO:0007669"/>
    <property type="project" value="InterPro"/>
</dbReference>
<dbReference type="CDD" id="cd06091">
    <property type="entry name" value="KOW_NusG"/>
    <property type="match status" value="1"/>
</dbReference>
<dbReference type="CDD" id="cd09891">
    <property type="entry name" value="NGN_Bact_1"/>
    <property type="match status" value="1"/>
</dbReference>
<dbReference type="FunFam" id="2.30.30.30:FF:000002">
    <property type="entry name" value="Transcription termination/antitermination factor NusG"/>
    <property type="match status" value="1"/>
</dbReference>
<dbReference type="Gene3D" id="2.30.30.30">
    <property type="match status" value="1"/>
</dbReference>
<dbReference type="Gene3D" id="3.30.70.940">
    <property type="entry name" value="NusG, N-terminal domain"/>
    <property type="match status" value="1"/>
</dbReference>
<dbReference type="HAMAP" id="MF_00948">
    <property type="entry name" value="NusG"/>
    <property type="match status" value="1"/>
</dbReference>
<dbReference type="InterPro" id="IPR005824">
    <property type="entry name" value="KOW"/>
</dbReference>
<dbReference type="InterPro" id="IPR047050">
    <property type="entry name" value="NGN"/>
</dbReference>
<dbReference type="InterPro" id="IPR006645">
    <property type="entry name" value="NGN-like_dom"/>
</dbReference>
<dbReference type="InterPro" id="IPR036735">
    <property type="entry name" value="NGN_dom_sf"/>
</dbReference>
<dbReference type="InterPro" id="IPR043425">
    <property type="entry name" value="NusG-like"/>
</dbReference>
<dbReference type="InterPro" id="IPR014722">
    <property type="entry name" value="Rib_uL2_dom2"/>
</dbReference>
<dbReference type="InterPro" id="IPR001062">
    <property type="entry name" value="Transcrpt_antiterm_NusG"/>
</dbReference>
<dbReference type="InterPro" id="IPR015869">
    <property type="entry name" value="Transcrpt_antiterm_NusG_bac_CS"/>
</dbReference>
<dbReference type="InterPro" id="IPR008991">
    <property type="entry name" value="Translation_prot_SH3-like_sf"/>
</dbReference>
<dbReference type="NCBIfam" id="TIGR00922">
    <property type="entry name" value="nusG"/>
    <property type="match status" value="1"/>
</dbReference>
<dbReference type="PANTHER" id="PTHR30265">
    <property type="entry name" value="RHO-INTERACTING TRANSCRIPTION TERMINATION FACTOR NUSG"/>
    <property type="match status" value="1"/>
</dbReference>
<dbReference type="PANTHER" id="PTHR30265:SF2">
    <property type="entry name" value="TRANSCRIPTION TERMINATION_ANTITERMINATION PROTEIN NUSG"/>
    <property type="match status" value="1"/>
</dbReference>
<dbReference type="Pfam" id="PF02357">
    <property type="entry name" value="NusG"/>
    <property type="match status" value="1"/>
</dbReference>
<dbReference type="PRINTS" id="PR00338">
    <property type="entry name" value="NUSGTNSCPFCT"/>
</dbReference>
<dbReference type="SMART" id="SM00739">
    <property type="entry name" value="KOW"/>
    <property type="match status" value="1"/>
</dbReference>
<dbReference type="SMART" id="SM00738">
    <property type="entry name" value="NGN"/>
    <property type="match status" value="1"/>
</dbReference>
<dbReference type="SUPFAM" id="SSF82679">
    <property type="entry name" value="N-utilization substance G protein NusG, N-terminal domain"/>
    <property type="match status" value="1"/>
</dbReference>
<dbReference type="SUPFAM" id="SSF50104">
    <property type="entry name" value="Translation proteins SH3-like domain"/>
    <property type="match status" value="1"/>
</dbReference>
<dbReference type="PROSITE" id="PS01014">
    <property type="entry name" value="NUSG"/>
    <property type="match status" value="1"/>
</dbReference>
<feature type="chain" id="PRO_0000113921" description="Transcription termination/antitermination protein NusG">
    <location>
        <begin position="1"/>
        <end position="177"/>
    </location>
</feature>
<feature type="domain" description="KOW" evidence="1">
    <location>
        <begin position="125"/>
        <end position="150"/>
    </location>
</feature>
<gene>
    <name evidence="1" type="primary">nusG</name>
    <name type="ordered locus">Cj0473</name>
</gene>